<name>ISPG_EHRRW</name>
<gene>
    <name evidence="1" type="primary">ispG</name>
    <name type="ordered locus">Erum4730</name>
    <name type="ordered locus">ERWE_CDS_04950</name>
</gene>
<reference key="1">
    <citation type="journal article" date="2005" name="Proc. Natl. Acad. Sci. U.S.A.">
        <title>The genome of the heartwater agent Ehrlichia ruminantium contains multiple tandem repeats of actively variable copy number.</title>
        <authorList>
            <person name="Collins N.E."/>
            <person name="Liebenberg J."/>
            <person name="de Villiers E.P."/>
            <person name="Brayton K.A."/>
            <person name="Louw E."/>
            <person name="Pretorius A."/>
            <person name="Faber F.E."/>
            <person name="van Heerden H."/>
            <person name="Josemans A."/>
            <person name="van Kleef M."/>
            <person name="Steyn H.C."/>
            <person name="van Strijp M.F."/>
            <person name="Zweygarth E."/>
            <person name="Jongejan F."/>
            <person name="Maillard J.C."/>
            <person name="Berthier D."/>
            <person name="Botha M."/>
            <person name="Joubert F."/>
            <person name="Corton C.H."/>
            <person name="Thomson N.R."/>
            <person name="Allsopp M.T."/>
            <person name="Allsopp B.A."/>
        </authorList>
    </citation>
    <scope>NUCLEOTIDE SEQUENCE [LARGE SCALE GENOMIC DNA]</scope>
    <source>
        <strain>Welgevonden</strain>
    </source>
</reference>
<reference key="2">
    <citation type="journal article" date="2006" name="J. Bacteriol.">
        <title>Comparative genomic analysis of three strains of Ehrlichia ruminantium reveals an active process of genome size plasticity.</title>
        <authorList>
            <person name="Frutos R."/>
            <person name="Viari A."/>
            <person name="Ferraz C."/>
            <person name="Morgat A."/>
            <person name="Eychenie S."/>
            <person name="Kandassamy Y."/>
            <person name="Chantal I."/>
            <person name="Bensaid A."/>
            <person name="Coissac E."/>
            <person name="Vachiery N."/>
            <person name="Demaille J."/>
            <person name="Martinez D."/>
        </authorList>
    </citation>
    <scope>NUCLEOTIDE SEQUENCE [LARGE SCALE GENOMIC DNA]</scope>
    <source>
        <strain>Welgevonden</strain>
    </source>
</reference>
<keyword id="KW-0004">4Fe-4S</keyword>
<keyword id="KW-0408">Iron</keyword>
<keyword id="KW-0411">Iron-sulfur</keyword>
<keyword id="KW-0414">Isoprene biosynthesis</keyword>
<keyword id="KW-0479">Metal-binding</keyword>
<keyword id="KW-0560">Oxidoreductase</keyword>
<proteinExistence type="inferred from homology"/>
<comment type="function">
    <text evidence="1">Converts 2C-methyl-D-erythritol 2,4-cyclodiphosphate (ME-2,4cPP) into 1-hydroxy-2-methyl-2-(E)-butenyl 4-diphosphate.</text>
</comment>
<comment type="catalytic activity">
    <reaction evidence="1">
        <text>(2E)-4-hydroxy-3-methylbut-2-enyl diphosphate + oxidized [flavodoxin] + H2O + 2 H(+) = 2-C-methyl-D-erythritol 2,4-cyclic diphosphate + reduced [flavodoxin]</text>
        <dbReference type="Rhea" id="RHEA:43604"/>
        <dbReference type="Rhea" id="RHEA-COMP:10622"/>
        <dbReference type="Rhea" id="RHEA-COMP:10623"/>
        <dbReference type="ChEBI" id="CHEBI:15377"/>
        <dbReference type="ChEBI" id="CHEBI:15378"/>
        <dbReference type="ChEBI" id="CHEBI:57618"/>
        <dbReference type="ChEBI" id="CHEBI:58210"/>
        <dbReference type="ChEBI" id="CHEBI:58483"/>
        <dbReference type="ChEBI" id="CHEBI:128753"/>
        <dbReference type="EC" id="1.17.7.3"/>
    </reaction>
</comment>
<comment type="cofactor">
    <cofactor evidence="1">
        <name>[4Fe-4S] cluster</name>
        <dbReference type="ChEBI" id="CHEBI:49883"/>
    </cofactor>
    <text evidence="1">Binds 1 [4Fe-4S] cluster.</text>
</comment>
<comment type="pathway">
    <text evidence="1">Isoprenoid biosynthesis; isopentenyl diphosphate biosynthesis via DXP pathway; isopentenyl diphosphate from 1-deoxy-D-xylulose 5-phosphate: step 5/6.</text>
</comment>
<comment type="similarity">
    <text evidence="1">Belongs to the IspG family.</text>
</comment>
<protein>
    <recommendedName>
        <fullName evidence="1">4-hydroxy-3-methylbut-2-en-1-yl diphosphate synthase (flavodoxin)</fullName>
        <ecNumber evidence="1">1.17.7.3</ecNumber>
    </recommendedName>
    <alternativeName>
        <fullName evidence="1">1-hydroxy-2-methyl-2-(E)-butenyl 4-diphosphate synthase</fullName>
    </alternativeName>
</protein>
<dbReference type="EC" id="1.17.7.3" evidence="1"/>
<dbReference type="EMBL" id="CR767821">
    <property type="protein sequence ID" value="CAH58201.1"/>
    <property type="molecule type" value="Genomic_DNA"/>
</dbReference>
<dbReference type="EMBL" id="CR925678">
    <property type="protein sequence ID" value="CAI26989.1"/>
    <property type="molecule type" value="Genomic_DNA"/>
</dbReference>
<dbReference type="RefSeq" id="WP_011155154.1">
    <property type="nucleotide sequence ID" value="NC_005295.2"/>
</dbReference>
<dbReference type="SMR" id="Q5HB57"/>
<dbReference type="GeneID" id="33057718"/>
<dbReference type="KEGG" id="eru:Erum4730"/>
<dbReference type="KEGG" id="erw:ERWE_CDS_04950"/>
<dbReference type="eggNOG" id="COG0821">
    <property type="taxonomic scope" value="Bacteria"/>
</dbReference>
<dbReference type="HOGENOM" id="CLU_042258_1_0_5"/>
<dbReference type="UniPathway" id="UPA00056">
    <property type="reaction ID" value="UER00096"/>
</dbReference>
<dbReference type="Proteomes" id="UP000001021">
    <property type="component" value="Chromosome"/>
</dbReference>
<dbReference type="GO" id="GO:0051539">
    <property type="term" value="F:4 iron, 4 sulfur cluster binding"/>
    <property type="evidence" value="ECO:0007669"/>
    <property type="project" value="UniProtKB-UniRule"/>
</dbReference>
<dbReference type="GO" id="GO:0046429">
    <property type="term" value="F:4-hydroxy-3-methylbut-2-en-1-yl diphosphate synthase activity (ferredoxin)"/>
    <property type="evidence" value="ECO:0007669"/>
    <property type="project" value="UniProtKB-UniRule"/>
</dbReference>
<dbReference type="GO" id="GO:0141197">
    <property type="term" value="F:4-hydroxy-3-methylbut-2-enyl-diphosphate synthase activity (flavodoxin)"/>
    <property type="evidence" value="ECO:0007669"/>
    <property type="project" value="UniProtKB-EC"/>
</dbReference>
<dbReference type="GO" id="GO:0005506">
    <property type="term" value="F:iron ion binding"/>
    <property type="evidence" value="ECO:0007669"/>
    <property type="project" value="InterPro"/>
</dbReference>
<dbReference type="GO" id="GO:0019288">
    <property type="term" value="P:isopentenyl diphosphate biosynthetic process, methylerythritol 4-phosphate pathway"/>
    <property type="evidence" value="ECO:0007669"/>
    <property type="project" value="UniProtKB-UniRule"/>
</dbReference>
<dbReference type="GO" id="GO:0016114">
    <property type="term" value="P:terpenoid biosynthetic process"/>
    <property type="evidence" value="ECO:0007669"/>
    <property type="project" value="InterPro"/>
</dbReference>
<dbReference type="FunFam" id="3.30.413.10:FF:000012">
    <property type="entry name" value="4-hydroxy-3-methylbut-2-en-1-yl diphosphate synthase (flavodoxin)"/>
    <property type="match status" value="1"/>
</dbReference>
<dbReference type="Gene3D" id="3.20.20.20">
    <property type="entry name" value="Dihydropteroate synthase-like"/>
    <property type="match status" value="1"/>
</dbReference>
<dbReference type="Gene3D" id="3.30.413.10">
    <property type="entry name" value="Sulfite Reductase Hemoprotein, domain 1"/>
    <property type="match status" value="1"/>
</dbReference>
<dbReference type="HAMAP" id="MF_00159">
    <property type="entry name" value="IspG"/>
    <property type="match status" value="1"/>
</dbReference>
<dbReference type="InterPro" id="IPR011005">
    <property type="entry name" value="Dihydropteroate_synth-like_sf"/>
</dbReference>
<dbReference type="InterPro" id="IPR016425">
    <property type="entry name" value="IspG_bac"/>
</dbReference>
<dbReference type="InterPro" id="IPR004588">
    <property type="entry name" value="IspG_bac-typ"/>
</dbReference>
<dbReference type="InterPro" id="IPR045854">
    <property type="entry name" value="NO2/SO3_Rdtase_4Fe4S_sf"/>
</dbReference>
<dbReference type="NCBIfam" id="TIGR00612">
    <property type="entry name" value="ispG_gcpE"/>
    <property type="match status" value="1"/>
</dbReference>
<dbReference type="NCBIfam" id="NF001540">
    <property type="entry name" value="PRK00366.1"/>
    <property type="match status" value="1"/>
</dbReference>
<dbReference type="PANTHER" id="PTHR30454">
    <property type="entry name" value="4-HYDROXY-3-METHYLBUT-2-EN-1-YL DIPHOSPHATE SYNTHASE"/>
    <property type="match status" value="1"/>
</dbReference>
<dbReference type="PANTHER" id="PTHR30454:SF0">
    <property type="entry name" value="4-HYDROXY-3-METHYLBUT-2-EN-1-YL DIPHOSPHATE SYNTHASE (FERREDOXIN), CHLOROPLASTIC"/>
    <property type="match status" value="1"/>
</dbReference>
<dbReference type="Pfam" id="PF04551">
    <property type="entry name" value="GcpE"/>
    <property type="match status" value="1"/>
</dbReference>
<dbReference type="PIRSF" id="PIRSF004640">
    <property type="entry name" value="IspG"/>
    <property type="match status" value="1"/>
</dbReference>
<feature type="chain" id="PRO_0000190576" description="4-hydroxy-3-methylbut-2-en-1-yl diphosphate synthase (flavodoxin)">
    <location>
        <begin position="1"/>
        <end position="422"/>
    </location>
</feature>
<feature type="binding site" evidence="1">
    <location>
        <position position="316"/>
    </location>
    <ligand>
        <name>[4Fe-4S] cluster</name>
        <dbReference type="ChEBI" id="CHEBI:49883"/>
    </ligand>
</feature>
<feature type="binding site" evidence="1">
    <location>
        <position position="319"/>
    </location>
    <ligand>
        <name>[4Fe-4S] cluster</name>
        <dbReference type="ChEBI" id="CHEBI:49883"/>
    </ligand>
</feature>
<feature type="binding site" evidence="1">
    <location>
        <position position="362"/>
    </location>
    <ligand>
        <name>[4Fe-4S] cluster</name>
        <dbReference type="ChEBI" id="CHEBI:49883"/>
    </ligand>
</feature>
<feature type="binding site" evidence="1">
    <location>
        <position position="369"/>
    </location>
    <ligand>
        <name>[4Fe-4S] cluster</name>
        <dbReference type="ChEBI" id="CHEBI:49883"/>
    </ligand>
</feature>
<evidence type="ECO:0000255" key="1">
    <source>
        <dbReference type="HAMAP-Rule" id="MF_00159"/>
    </source>
</evidence>
<accession>Q5HB57</accession>
<accession>Q5FCA3</accession>
<sequence>MQCDFVDRILNEYDLLNAIVYRSKFTHEVKVGDVIIGGNNPIVVQSMALGGSGDVYQDAREVLELAQAGSELVRIAINSDKAIKSVPYIRDVLINHGFNSKMIIGCGQYEIARLVKQYPECALALGKIRINPGNIGFGDKRDKNFEDIIEFAIKNDIPIRIGVNWGSLDKYLAAKLMHDNSLRGTPDPDYVVLRKALVISAITSAKHAEKVGLPANKIVISCKVSKVRDLISVYTMLSKICDYPLHLGLTEAGSGVKGIVGSSAGISYLLLHGIGNTIRVSLTQQPGESRTNEVKLCQEILQSIGLRNFSVQVTSCPGCNRTNPKYFHQLVSDVNKYVADRMSVWKNANPGVENMTIAVMGCVVNGPGESKHANLGISMPGYGERSVAAVYQNGEKLCTLEGNNIFEQFVSIIENYVSIYYH</sequence>
<organism>
    <name type="scientific">Ehrlichia ruminantium (strain Welgevonden)</name>
    <dbReference type="NCBI Taxonomy" id="254945"/>
    <lineage>
        <taxon>Bacteria</taxon>
        <taxon>Pseudomonadati</taxon>
        <taxon>Pseudomonadota</taxon>
        <taxon>Alphaproteobacteria</taxon>
        <taxon>Rickettsiales</taxon>
        <taxon>Anaplasmataceae</taxon>
        <taxon>Ehrlichia</taxon>
    </lineage>
</organism>